<evidence type="ECO:0000255" key="1"/>
<evidence type="ECO:0000255" key="2">
    <source>
        <dbReference type="PROSITE-ProRule" id="PRU10083"/>
    </source>
</evidence>
<evidence type="ECO:0000256" key="3">
    <source>
        <dbReference type="SAM" id="MobiDB-lite"/>
    </source>
</evidence>
<evidence type="ECO:0000269" key="4">
    <source>
    </source>
</evidence>
<evidence type="ECO:0000269" key="5">
    <source>
    </source>
</evidence>
<evidence type="ECO:0000269" key="6">
    <source>
    </source>
</evidence>
<evidence type="ECO:0000305" key="7"/>
<evidence type="ECO:0007829" key="8">
    <source>
        <dbReference type="PDB" id="1WCZ"/>
    </source>
</evidence>
<name>SSPA_STAAU</name>
<gene>
    <name type="primary">sspA</name>
</gene>
<keyword id="KW-0002">3D-structure</keyword>
<keyword id="KW-0903">Direct protein sequencing</keyword>
<keyword id="KW-0378">Hydrolase</keyword>
<keyword id="KW-0645">Protease</keyword>
<keyword id="KW-0677">Repeat</keyword>
<keyword id="KW-0964">Secreted</keyword>
<keyword id="KW-0720">Serine protease</keyword>
<keyword id="KW-0732">Signal</keyword>
<keyword id="KW-0843">Virulence</keyword>
<keyword id="KW-0865">Zymogen</keyword>
<protein>
    <recommendedName>
        <fullName>Glutamyl endopeptidase</fullName>
        <ecNumber>3.4.21.19</ecNumber>
    </recommendedName>
    <alternativeName>
        <fullName>Endoproteinase Glu-C</fullName>
    </alternativeName>
    <alternativeName>
        <fullName>Staphylococcal serine proteinase</fullName>
    </alternativeName>
    <alternativeName>
        <fullName>V8 protease</fullName>
    </alternativeName>
    <alternativeName>
        <fullName>V8 proteinase</fullName>
    </alternativeName>
</protein>
<proteinExistence type="evidence at protein level"/>
<reference key="1">
    <citation type="journal article" date="1987" name="Nucleic Acids Res.">
        <title>Nucleotide sequence of the serine protease gene of Staphylococcus aureus, strain V8.</title>
        <authorList>
            <person name="Carmona C."/>
            <person name="Gray G.L."/>
        </authorList>
    </citation>
    <scope>NUCLEOTIDE SEQUENCE [GENOMIC DNA]</scope>
    <source>
        <strain>ATCC 27733 / V8</strain>
    </source>
</reference>
<reference key="2">
    <citation type="journal article" date="1978" name="Can. J. Biochem.">
        <title>The primary structure of staphylococcal protease.</title>
        <authorList>
            <person name="Drapeau G.R."/>
        </authorList>
    </citation>
    <scope>PROTEIN SEQUENCE OF 69-280</scope>
    <source>
        <strain>ATCC 27733 / V8</strain>
    </source>
</reference>
<reference key="3">
    <citation type="journal article" date="1972" name="J. Biol. Chem.">
        <title>Purification and properties of an extracellular protease of Staphylococcus aureus.</title>
        <authorList>
            <person name="Drapeau G.R."/>
            <person name="Boily Y."/>
            <person name="Houmard J."/>
        </authorList>
    </citation>
    <scope>FUNCTION</scope>
    <scope>SUBCELLULAR LOCATION</scope>
    <source>
        <strain>ATCC 27733 / V8</strain>
    </source>
</reference>
<reference key="4">
    <citation type="journal article" date="1992" name="Immunol. Lett.">
        <title>Cleavage of human immunoglobulins by serine proteinase from Staphylococcus aureus.</title>
        <authorList>
            <person name="Prokesova L."/>
            <person name="Potuznikova B."/>
            <person name="Potempa J."/>
            <person name="Zikan J."/>
            <person name="Radl J."/>
            <person name="Hachova L."/>
            <person name="Baran K."/>
            <person name="Porwit-Bobr Z."/>
            <person name="John C."/>
        </authorList>
    </citation>
    <scope>FUNCTION</scope>
    <source>
        <strain>ATCC 27733 / V8</strain>
    </source>
</reference>
<reference key="5">
    <citation type="submission" date="2004-06" db="PDB data bank">
        <title>Crystal structure of an alkaline form of V8 protease from Staphylococcus aureus.</title>
        <authorList>
            <person name="Yamada K."/>
            <person name="Ohta M."/>
            <person name="Hasegawa T."/>
            <person name="Torii K."/>
            <person name="Murakami M."/>
            <person name="Kouyama K."/>
        </authorList>
    </citation>
    <scope>X-RAY CRYSTALLOGRAPHY (2.0 ANGSTROMS) OF 69-336</scope>
    <source>
        <strain>ATCC 27733 / V8</strain>
    </source>
</reference>
<dbReference type="EC" id="3.4.21.19"/>
<dbReference type="EMBL" id="Y00356">
    <property type="protein sequence ID" value="CAA68434.1"/>
    <property type="molecule type" value="Genomic_DNA"/>
</dbReference>
<dbReference type="PIR" id="A26812">
    <property type="entry name" value="PRSASK"/>
</dbReference>
<dbReference type="RefSeq" id="WP_000676548.1">
    <property type="nucleotide sequence ID" value="NZ_WWFR01000001.1"/>
</dbReference>
<dbReference type="PDB" id="1WCZ">
    <property type="method" value="X-ray"/>
    <property type="resolution" value="2.00 A"/>
    <property type="chains" value="A=69-336"/>
</dbReference>
<dbReference type="PDBsum" id="1WCZ"/>
<dbReference type="SMR" id="P0C1U8"/>
<dbReference type="IntAct" id="P0C1U8">
    <property type="interactions" value="1"/>
</dbReference>
<dbReference type="BindingDB" id="P0C1U8"/>
<dbReference type="ChEMBL" id="CHEMBL5115"/>
<dbReference type="MEROPS" id="S01.269"/>
<dbReference type="OMA" id="VPNQFNG"/>
<dbReference type="EvolutionaryTrace" id="P0C1U8"/>
<dbReference type="PRO" id="PR:P0C1U8"/>
<dbReference type="GO" id="GO:0005576">
    <property type="term" value="C:extracellular region"/>
    <property type="evidence" value="ECO:0007669"/>
    <property type="project" value="UniProtKB-SubCell"/>
</dbReference>
<dbReference type="GO" id="GO:0004252">
    <property type="term" value="F:serine-type endopeptidase activity"/>
    <property type="evidence" value="ECO:0007669"/>
    <property type="project" value="InterPro"/>
</dbReference>
<dbReference type="GO" id="GO:0006508">
    <property type="term" value="P:proteolysis"/>
    <property type="evidence" value="ECO:0007669"/>
    <property type="project" value="UniProtKB-KW"/>
</dbReference>
<dbReference type="Gene3D" id="2.40.10.10">
    <property type="entry name" value="Trypsin-like serine proteases"/>
    <property type="match status" value="2"/>
</dbReference>
<dbReference type="InterPro" id="IPR050966">
    <property type="entry name" value="Glutamyl_endopeptidase"/>
</dbReference>
<dbReference type="InterPro" id="IPR009003">
    <property type="entry name" value="Peptidase_S1_PA"/>
</dbReference>
<dbReference type="InterPro" id="IPR043504">
    <property type="entry name" value="Peptidase_S1_PA_chymotrypsin"/>
</dbReference>
<dbReference type="InterPro" id="IPR008256">
    <property type="entry name" value="Peptidase_S1B"/>
</dbReference>
<dbReference type="InterPro" id="IPR008353">
    <property type="entry name" value="Peptidase_S1B_tx"/>
</dbReference>
<dbReference type="InterPro" id="IPR028301">
    <property type="entry name" value="V8_his_AS"/>
</dbReference>
<dbReference type="InterPro" id="IPR000126">
    <property type="entry name" value="V8_ser_AS"/>
</dbReference>
<dbReference type="PANTHER" id="PTHR15462">
    <property type="entry name" value="SERINE PROTEASE"/>
    <property type="match status" value="1"/>
</dbReference>
<dbReference type="PANTHER" id="PTHR15462:SF8">
    <property type="entry name" value="SERINE PROTEASE"/>
    <property type="match status" value="1"/>
</dbReference>
<dbReference type="Pfam" id="PF13365">
    <property type="entry name" value="Trypsin_2"/>
    <property type="match status" value="1"/>
</dbReference>
<dbReference type="PRINTS" id="PR01774">
    <property type="entry name" value="EXFOLTOXIN"/>
</dbReference>
<dbReference type="PRINTS" id="PR00839">
    <property type="entry name" value="V8PROTEASE"/>
</dbReference>
<dbReference type="SUPFAM" id="SSF50494">
    <property type="entry name" value="Trypsin-like serine proteases"/>
    <property type="match status" value="1"/>
</dbReference>
<dbReference type="PROSITE" id="PS00672">
    <property type="entry name" value="V8_HIS"/>
    <property type="match status" value="1"/>
</dbReference>
<dbReference type="PROSITE" id="PS00673">
    <property type="entry name" value="V8_SER"/>
    <property type="match status" value="1"/>
</dbReference>
<feature type="signal peptide" evidence="1">
    <location>
        <begin position="1"/>
        <end position="29"/>
    </location>
</feature>
<feature type="propeptide" id="PRO_0000026882" evidence="6">
    <location>
        <begin position="30"/>
        <end position="68"/>
    </location>
</feature>
<feature type="chain" id="PRO_0000026883" description="Glutamyl endopeptidase">
    <location>
        <begin position="69"/>
        <end position="336"/>
    </location>
</feature>
<feature type="repeat" description="1">
    <location>
        <begin position="289"/>
        <end position="291"/>
    </location>
</feature>
<feature type="repeat" description="2">
    <location>
        <begin position="292"/>
        <end position="294"/>
    </location>
</feature>
<feature type="repeat" description="3">
    <location>
        <begin position="295"/>
        <end position="297"/>
    </location>
</feature>
<feature type="repeat" description="4">
    <location>
        <begin position="298"/>
        <end position="300"/>
    </location>
</feature>
<feature type="repeat" description="5">
    <location>
        <begin position="301"/>
        <end position="303"/>
    </location>
</feature>
<feature type="repeat" description="6">
    <location>
        <begin position="304"/>
        <end position="306"/>
    </location>
</feature>
<feature type="repeat" description="7">
    <location>
        <begin position="310"/>
        <end position="312"/>
    </location>
</feature>
<feature type="repeat" description="8">
    <location>
        <begin position="313"/>
        <end position="315"/>
    </location>
</feature>
<feature type="repeat" description="9">
    <location>
        <begin position="316"/>
        <end position="318"/>
    </location>
</feature>
<feature type="repeat" description="10">
    <location>
        <begin position="319"/>
        <end position="321"/>
    </location>
</feature>
<feature type="repeat" description="11">
    <location>
        <begin position="322"/>
        <end position="324"/>
    </location>
</feature>
<feature type="region of interest" description="Disordered" evidence="3">
    <location>
        <begin position="34"/>
        <end position="61"/>
    </location>
</feature>
<feature type="region of interest" description="Disordered" evidence="3">
    <location>
        <begin position="283"/>
        <end position="336"/>
    </location>
</feature>
<feature type="region of interest" description="11 X 3 AA repeats of P-[DN]-N">
    <location>
        <begin position="289"/>
        <end position="324"/>
    </location>
</feature>
<feature type="compositionally biased region" description="Low complexity" evidence="3">
    <location>
        <begin position="39"/>
        <end position="51"/>
    </location>
</feature>
<feature type="compositionally biased region" description="Low complexity" evidence="3">
    <location>
        <begin position="286"/>
        <end position="336"/>
    </location>
</feature>
<feature type="active site" description="Charge relay system">
    <location>
        <position position="119"/>
    </location>
</feature>
<feature type="active site" description="Charge relay system">
    <location>
        <position position="161"/>
    </location>
</feature>
<feature type="active site" description="Charge relay system">
    <location>
        <position position="237"/>
    </location>
</feature>
<feature type="site" description="Cleavage; by aureolysin">
    <location>
        <begin position="68"/>
        <end position="69"/>
    </location>
</feature>
<feature type="sequence conflict" description="In Ref. 2; AA sequence." evidence="7" ref="2">
    <location>
        <position position="109"/>
    </location>
</feature>
<feature type="sequence conflict" description="In Ref. 2; AA sequence." evidence="7" ref="2">
    <location>
        <position position="125"/>
    </location>
</feature>
<feature type="sequence conflict" description="In Ref. 2; AA sequence." evidence="7" ref="2">
    <original>N</original>
    <variation>D</variation>
    <location>
        <position position="145"/>
    </location>
</feature>
<feature type="sequence conflict" description="In Ref. 2; AA sequence." evidence="7" ref="2">
    <original>V</original>
    <variation>T</variation>
    <location>
        <position position="193"/>
    </location>
</feature>
<feature type="sequence conflict" description="In Ref. 2; AA sequence." evidence="7" ref="2">
    <original>D</original>
    <variation>N</variation>
    <location>
        <position position="229"/>
    </location>
</feature>
<feature type="sequence conflict" description="In Ref. 2; AA sequence." evidence="7" ref="2">
    <original>EFN</original>
    <variation>QFD</variation>
    <location>
        <begin position="259"/>
        <end position="261"/>
    </location>
</feature>
<feature type="sequence conflict" description="In Ref. 2; AA sequence." evidence="7" ref="2">
    <original>ENV</original>
    <variation>NEVN</variation>
    <location>
        <begin position="268"/>
        <end position="270"/>
    </location>
</feature>
<feature type="strand" evidence="8">
    <location>
        <begin position="75"/>
        <end position="80"/>
    </location>
</feature>
<feature type="helix" evidence="8">
    <location>
        <begin position="85"/>
        <end position="87"/>
    </location>
</feature>
<feature type="strand" evidence="8">
    <location>
        <begin position="90"/>
        <end position="96"/>
    </location>
</feature>
<feature type="strand" evidence="8">
    <location>
        <begin position="101"/>
        <end position="108"/>
    </location>
</feature>
<feature type="strand" evidence="8">
    <location>
        <begin position="110"/>
        <end position="116"/>
    </location>
</feature>
<feature type="helix" evidence="8">
    <location>
        <begin position="118"/>
        <end position="121"/>
    </location>
</feature>
<feature type="helix" evidence="8">
    <location>
        <begin position="122"/>
        <end position="124"/>
    </location>
</feature>
<feature type="helix" evidence="8">
    <location>
        <begin position="128"/>
        <end position="130"/>
    </location>
</feature>
<feature type="strand" evidence="8">
    <location>
        <begin position="131"/>
        <end position="135"/>
    </location>
</feature>
<feature type="strand" evidence="8">
    <location>
        <begin position="148"/>
        <end position="155"/>
    </location>
</feature>
<feature type="strand" evidence="8">
    <location>
        <begin position="157"/>
        <end position="160"/>
    </location>
</feature>
<feature type="strand" evidence="8">
    <location>
        <begin position="163"/>
        <end position="167"/>
    </location>
</feature>
<feature type="helix" evidence="8">
    <location>
        <begin position="176"/>
        <end position="179"/>
    </location>
</feature>
<feature type="strand" evidence="8">
    <location>
        <begin position="196"/>
        <end position="201"/>
    </location>
</feature>
<feature type="strand" evidence="8">
    <location>
        <begin position="211"/>
        <end position="222"/>
    </location>
</feature>
<feature type="strand" evidence="8">
    <location>
        <begin position="225"/>
        <end position="230"/>
    </location>
</feature>
<feature type="strand" evidence="8">
    <location>
        <begin position="240"/>
        <end position="242"/>
    </location>
</feature>
<feature type="strand" evidence="8">
    <location>
        <begin position="248"/>
        <end position="256"/>
    </location>
</feature>
<feature type="turn" evidence="8">
    <location>
        <begin position="257"/>
        <end position="259"/>
    </location>
</feature>
<feature type="strand" evidence="8">
    <location>
        <begin position="260"/>
        <end position="265"/>
    </location>
</feature>
<feature type="helix" evidence="8">
    <location>
        <begin position="268"/>
        <end position="277"/>
    </location>
</feature>
<organism>
    <name type="scientific">Staphylococcus aureus</name>
    <dbReference type="NCBI Taxonomy" id="1280"/>
    <lineage>
        <taxon>Bacteria</taxon>
        <taxon>Bacillati</taxon>
        <taxon>Bacillota</taxon>
        <taxon>Bacilli</taxon>
        <taxon>Bacillales</taxon>
        <taxon>Staphylococcaceae</taxon>
        <taxon>Staphylococcus</taxon>
    </lineage>
</organism>
<sequence length="336" mass="36326">MKGKFLKVSSLFVATLTTATLVSSPAANALSSKAMDNHPQQTQSSKQQTPKIQKGGNLKPLEQREHANVILPNNDRHQITDTTNGHYAPVTYIQVEAPTGTFIASGVVVGKDTLLTNKHVVDATHGDPHALKAFPSAINQDNYPNGGFTAEQITKYSGEGDLAIVKFSPNEQNKHIGEVVKPATMSNNAETQVNQNITVTGYPGDKPVATMWESKGKITYLKGEAMQYDLSTTGGNSGSPVFNEKNEVIGIHWGGVPNEFNGAVFINENVRNFLKQNIEDIHFANDDQPNNPDNPDNPNNPDNPNNPDEPNNPDNPNNPDNPDNGDNNNSDNPDAA</sequence>
<comment type="function">
    <text evidence="4 5">Preferentially cleaves peptide bonds on the carboxyl-terminal side of aspartate and glutamate. Along with other extracellular proteases it is involved in colonization and infection of human tissues. Required for proteolytic maturation of thiol protease SspB and inactivation of SspC, an inhibitor of SspB. It is the most important protease for degradation of fibronectin-binding protein (FnBP) and surface protein A, which are involved in adherence to host cells. May also protect bacteria against host defense mechanism by cleaving the immunoglobulin classes IgG, IgA and IgM. May be involved in the stability of secreted lipases.</text>
</comment>
<comment type="catalytic activity">
    <reaction evidence="2">
        <text>Preferential cleavage: Glu-|-Xaa, Asp-|-Xaa.</text>
        <dbReference type="EC" id="3.4.21.19"/>
    </reaction>
</comment>
<comment type="subcellular location">
    <subcellularLocation>
        <location evidence="5">Secreted</location>
    </subcellularLocation>
</comment>
<comment type="PTM">
    <text>Proteolytically cleaved by aureolysin (aur). This cleavage leads to the activation of SspA.</text>
</comment>
<comment type="miscellaneous">
    <text>The cascade of activation of extracellular proteases proceeds from the metalloprotease aureolysin (aur), through SspA to SspB.</text>
</comment>
<comment type="similarity">
    <text evidence="7">Belongs to the peptidase S1B family.</text>
</comment>
<accession>P0C1U8</accession>
<accession>P04188</accession>